<evidence type="ECO:0000255" key="1">
    <source>
        <dbReference type="HAMAP-Rule" id="MF_00036"/>
    </source>
</evidence>
<proteinExistence type="inferred from homology"/>
<protein>
    <recommendedName>
        <fullName evidence="1">Alanine--tRNA ligase</fullName>
        <ecNumber evidence="1">6.1.1.7</ecNumber>
    </recommendedName>
    <alternativeName>
        <fullName evidence="1">Alanyl-tRNA synthetase</fullName>
        <shortName evidence="1">AlaRS</shortName>
    </alternativeName>
</protein>
<dbReference type="EC" id="6.1.1.7" evidence="1"/>
<dbReference type="EMBL" id="BX640416">
    <property type="protein sequence ID" value="CAE42122.1"/>
    <property type="molecule type" value="Genomic_DNA"/>
</dbReference>
<dbReference type="RefSeq" id="NP_880538.1">
    <property type="nucleotide sequence ID" value="NC_002929.2"/>
</dbReference>
<dbReference type="RefSeq" id="WP_010930590.1">
    <property type="nucleotide sequence ID" value="NZ_CP039022.1"/>
</dbReference>
<dbReference type="SMR" id="Q7VXE1"/>
<dbReference type="STRING" id="257313.BP1836"/>
<dbReference type="PaxDb" id="257313-BP1836"/>
<dbReference type="GeneID" id="69601991"/>
<dbReference type="KEGG" id="bpe:BP1836"/>
<dbReference type="PATRIC" id="fig|257313.5.peg.1973"/>
<dbReference type="eggNOG" id="COG0013">
    <property type="taxonomic scope" value="Bacteria"/>
</dbReference>
<dbReference type="HOGENOM" id="CLU_004485_1_1_4"/>
<dbReference type="Proteomes" id="UP000002676">
    <property type="component" value="Chromosome"/>
</dbReference>
<dbReference type="GO" id="GO:0005829">
    <property type="term" value="C:cytosol"/>
    <property type="evidence" value="ECO:0007669"/>
    <property type="project" value="TreeGrafter"/>
</dbReference>
<dbReference type="GO" id="GO:0004813">
    <property type="term" value="F:alanine-tRNA ligase activity"/>
    <property type="evidence" value="ECO:0007669"/>
    <property type="project" value="UniProtKB-UniRule"/>
</dbReference>
<dbReference type="GO" id="GO:0002161">
    <property type="term" value="F:aminoacyl-tRNA deacylase activity"/>
    <property type="evidence" value="ECO:0007669"/>
    <property type="project" value="TreeGrafter"/>
</dbReference>
<dbReference type="GO" id="GO:0005524">
    <property type="term" value="F:ATP binding"/>
    <property type="evidence" value="ECO:0007669"/>
    <property type="project" value="UniProtKB-UniRule"/>
</dbReference>
<dbReference type="GO" id="GO:0000049">
    <property type="term" value="F:tRNA binding"/>
    <property type="evidence" value="ECO:0007669"/>
    <property type="project" value="UniProtKB-KW"/>
</dbReference>
<dbReference type="GO" id="GO:0008270">
    <property type="term" value="F:zinc ion binding"/>
    <property type="evidence" value="ECO:0007669"/>
    <property type="project" value="UniProtKB-UniRule"/>
</dbReference>
<dbReference type="GO" id="GO:0006419">
    <property type="term" value="P:alanyl-tRNA aminoacylation"/>
    <property type="evidence" value="ECO:0007669"/>
    <property type="project" value="UniProtKB-UniRule"/>
</dbReference>
<dbReference type="GO" id="GO:0045892">
    <property type="term" value="P:negative regulation of DNA-templated transcription"/>
    <property type="evidence" value="ECO:0007669"/>
    <property type="project" value="TreeGrafter"/>
</dbReference>
<dbReference type="CDD" id="cd00673">
    <property type="entry name" value="AlaRS_core"/>
    <property type="match status" value="1"/>
</dbReference>
<dbReference type="FunFam" id="2.40.30.130:FF:000001">
    <property type="entry name" value="Alanine--tRNA ligase"/>
    <property type="match status" value="1"/>
</dbReference>
<dbReference type="FunFam" id="3.10.310.40:FF:000001">
    <property type="entry name" value="Alanine--tRNA ligase"/>
    <property type="match status" value="1"/>
</dbReference>
<dbReference type="FunFam" id="3.30.54.20:FF:000001">
    <property type="entry name" value="Alanine--tRNA ligase"/>
    <property type="match status" value="1"/>
</dbReference>
<dbReference type="FunFam" id="3.30.930.10:FF:000004">
    <property type="entry name" value="Alanine--tRNA ligase"/>
    <property type="match status" value="1"/>
</dbReference>
<dbReference type="FunFam" id="3.30.980.10:FF:000004">
    <property type="entry name" value="Alanine--tRNA ligase, cytoplasmic"/>
    <property type="match status" value="1"/>
</dbReference>
<dbReference type="Gene3D" id="2.40.30.130">
    <property type="match status" value="1"/>
</dbReference>
<dbReference type="Gene3D" id="3.10.310.40">
    <property type="match status" value="1"/>
</dbReference>
<dbReference type="Gene3D" id="3.30.54.20">
    <property type="match status" value="1"/>
</dbReference>
<dbReference type="Gene3D" id="6.10.250.550">
    <property type="match status" value="1"/>
</dbReference>
<dbReference type="Gene3D" id="3.30.930.10">
    <property type="entry name" value="Bira Bifunctional Protein, Domain 2"/>
    <property type="match status" value="1"/>
</dbReference>
<dbReference type="Gene3D" id="3.30.980.10">
    <property type="entry name" value="Threonyl-trna Synthetase, Chain A, domain 2"/>
    <property type="match status" value="1"/>
</dbReference>
<dbReference type="HAMAP" id="MF_00036_B">
    <property type="entry name" value="Ala_tRNA_synth_B"/>
    <property type="match status" value="1"/>
</dbReference>
<dbReference type="InterPro" id="IPR045864">
    <property type="entry name" value="aa-tRNA-synth_II/BPL/LPL"/>
</dbReference>
<dbReference type="InterPro" id="IPR002318">
    <property type="entry name" value="Ala-tRNA-lgiase_IIc"/>
</dbReference>
<dbReference type="InterPro" id="IPR018162">
    <property type="entry name" value="Ala-tRNA-ligase_IIc_anticod-bd"/>
</dbReference>
<dbReference type="InterPro" id="IPR018165">
    <property type="entry name" value="Ala-tRNA-synth_IIc_core"/>
</dbReference>
<dbReference type="InterPro" id="IPR018164">
    <property type="entry name" value="Ala-tRNA-synth_IIc_N"/>
</dbReference>
<dbReference type="InterPro" id="IPR050058">
    <property type="entry name" value="Ala-tRNA_ligase"/>
</dbReference>
<dbReference type="InterPro" id="IPR023033">
    <property type="entry name" value="Ala_tRNA_ligase_euk/bac"/>
</dbReference>
<dbReference type="InterPro" id="IPR003156">
    <property type="entry name" value="DHHA1_dom"/>
</dbReference>
<dbReference type="InterPro" id="IPR018163">
    <property type="entry name" value="Thr/Ala-tRNA-synth_IIc_edit"/>
</dbReference>
<dbReference type="InterPro" id="IPR009000">
    <property type="entry name" value="Transl_B-barrel_sf"/>
</dbReference>
<dbReference type="InterPro" id="IPR012947">
    <property type="entry name" value="tRNA_SAD"/>
</dbReference>
<dbReference type="NCBIfam" id="TIGR00344">
    <property type="entry name" value="alaS"/>
    <property type="match status" value="1"/>
</dbReference>
<dbReference type="PANTHER" id="PTHR11777:SF9">
    <property type="entry name" value="ALANINE--TRNA LIGASE, CYTOPLASMIC"/>
    <property type="match status" value="1"/>
</dbReference>
<dbReference type="PANTHER" id="PTHR11777">
    <property type="entry name" value="ALANYL-TRNA SYNTHETASE"/>
    <property type="match status" value="1"/>
</dbReference>
<dbReference type="Pfam" id="PF02272">
    <property type="entry name" value="DHHA1"/>
    <property type="match status" value="1"/>
</dbReference>
<dbReference type="Pfam" id="PF01411">
    <property type="entry name" value="tRNA-synt_2c"/>
    <property type="match status" value="1"/>
</dbReference>
<dbReference type="Pfam" id="PF07973">
    <property type="entry name" value="tRNA_SAD"/>
    <property type="match status" value="1"/>
</dbReference>
<dbReference type="PRINTS" id="PR00980">
    <property type="entry name" value="TRNASYNTHALA"/>
</dbReference>
<dbReference type="SMART" id="SM00863">
    <property type="entry name" value="tRNA_SAD"/>
    <property type="match status" value="1"/>
</dbReference>
<dbReference type="SUPFAM" id="SSF55681">
    <property type="entry name" value="Class II aaRS and biotin synthetases"/>
    <property type="match status" value="1"/>
</dbReference>
<dbReference type="SUPFAM" id="SSF101353">
    <property type="entry name" value="Putative anticodon-binding domain of alanyl-tRNA synthetase (AlaRS)"/>
    <property type="match status" value="1"/>
</dbReference>
<dbReference type="SUPFAM" id="SSF55186">
    <property type="entry name" value="ThrRS/AlaRS common domain"/>
    <property type="match status" value="1"/>
</dbReference>
<dbReference type="SUPFAM" id="SSF50447">
    <property type="entry name" value="Translation proteins"/>
    <property type="match status" value="1"/>
</dbReference>
<dbReference type="PROSITE" id="PS50860">
    <property type="entry name" value="AA_TRNA_LIGASE_II_ALA"/>
    <property type="match status" value="1"/>
</dbReference>
<feature type="chain" id="PRO_0000075071" description="Alanine--tRNA ligase">
    <location>
        <begin position="1"/>
        <end position="874"/>
    </location>
</feature>
<feature type="binding site" evidence="1">
    <location>
        <position position="562"/>
    </location>
    <ligand>
        <name>Zn(2+)</name>
        <dbReference type="ChEBI" id="CHEBI:29105"/>
    </ligand>
</feature>
<feature type="binding site" evidence="1">
    <location>
        <position position="566"/>
    </location>
    <ligand>
        <name>Zn(2+)</name>
        <dbReference type="ChEBI" id="CHEBI:29105"/>
    </ligand>
</feature>
<feature type="binding site" evidence="1">
    <location>
        <position position="663"/>
    </location>
    <ligand>
        <name>Zn(2+)</name>
        <dbReference type="ChEBI" id="CHEBI:29105"/>
    </ligand>
</feature>
<feature type="binding site" evidence="1">
    <location>
        <position position="667"/>
    </location>
    <ligand>
        <name>Zn(2+)</name>
        <dbReference type="ChEBI" id="CHEBI:29105"/>
    </ligand>
</feature>
<keyword id="KW-0030">Aminoacyl-tRNA synthetase</keyword>
<keyword id="KW-0067">ATP-binding</keyword>
<keyword id="KW-0963">Cytoplasm</keyword>
<keyword id="KW-0436">Ligase</keyword>
<keyword id="KW-0479">Metal-binding</keyword>
<keyword id="KW-0547">Nucleotide-binding</keyword>
<keyword id="KW-0648">Protein biosynthesis</keyword>
<keyword id="KW-1185">Reference proteome</keyword>
<keyword id="KW-0694">RNA-binding</keyword>
<keyword id="KW-0820">tRNA-binding</keyword>
<keyword id="KW-0862">Zinc</keyword>
<sequence length="874" mass="94928">MKSSEIRQKFLQFFQSKGHTIVPSSSLVPANDPTLLFTNSGMVQFKDVFTGKEARAYKRATSSQRSVRAGGKHNDLENVGYTARHHTFFEMLGNFSFGDYFKREAIQYAWELLTQVYKLPAEKLWVTVYQEDDEAYDIWAKEVGVPAERIIRIGDNKGARYASDNFWQMADTGPCGPCSEIFYDHGPEIWGGPPGSPEEDGDRYIEIWNLVFMQFERDAAGNMERLPKPCVDTGMGLERIAAVLQHVHSNYEIDLFQKLIAAAARETGVKDLADNSLKVIADHIRACAFLIVDGIIPSNEGRGYVLRRIVRRALRHGYKLGQTKSFFHRLVPDLVAEMGEAYPELAQVAERVAQVLRQEEERFGETLEHGMKILDGALAKVAKGDPLDGTTLFTLYDTYGFPVDLTADICREREVEVDMAGFEAAMQRQREQARAAGKFKMAEGLSYEGAETRFEGYENLELSGVKVTALYVEGTQVEQVSAGQDAVVVLDATPFYAESGGQVGDTGLLEAGGVRFAVADTLKIQPGVFGHHGTLEAGALKVGDTLLARVDAVRRARTVRNHSATHLMHKALREVLGAHVQQRGSLVDPDKTRFDFAHDAPMTAEQIARVEAIVNAEVLANQATEAKVMAYDDAVKGGAMALFGEKYGDTVRVLDIGFSRELCGGTHVRRTGDIGLFKVVSEGGVAAGVRRIEAITGDNALAWVQDQNALLQRAAGVLRAPAHELPERIAQVQEQLKALEKELEQARTKLAASAGNDLVATATVEVKGIKVLAASIGDVDPKALRGMVDNLKDRLKPAVVLLAAGSADGKISLVGGVTADLTGRIKAGDLVGFVAGQVGGKGGGRPDMAMGGGTDLAALPAAVASVQKWVDERL</sequence>
<gene>
    <name evidence="1" type="primary">alaS</name>
    <name type="synonym">lovB</name>
    <name type="ordered locus">BP1836</name>
</gene>
<reference key="1">
    <citation type="journal article" date="2003" name="Nat. Genet.">
        <title>Comparative analysis of the genome sequences of Bordetella pertussis, Bordetella parapertussis and Bordetella bronchiseptica.</title>
        <authorList>
            <person name="Parkhill J."/>
            <person name="Sebaihia M."/>
            <person name="Preston A."/>
            <person name="Murphy L.D."/>
            <person name="Thomson N.R."/>
            <person name="Harris D.E."/>
            <person name="Holden M.T.G."/>
            <person name="Churcher C.M."/>
            <person name="Bentley S.D."/>
            <person name="Mungall K.L."/>
            <person name="Cerdeno-Tarraga A.-M."/>
            <person name="Temple L."/>
            <person name="James K.D."/>
            <person name="Harris B."/>
            <person name="Quail M.A."/>
            <person name="Achtman M."/>
            <person name="Atkin R."/>
            <person name="Baker S."/>
            <person name="Basham D."/>
            <person name="Bason N."/>
            <person name="Cherevach I."/>
            <person name="Chillingworth T."/>
            <person name="Collins M."/>
            <person name="Cronin A."/>
            <person name="Davis P."/>
            <person name="Doggett J."/>
            <person name="Feltwell T."/>
            <person name="Goble A."/>
            <person name="Hamlin N."/>
            <person name="Hauser H."/>
            <person name="Holroyd S."/>
            <person name="Jagels K."/>
            <person name="Leather S."/>
            <person name="Moule S."/>
            <person name="Norberczak H."/>
            <person name="O'Neil S."/>
            <person name="Ormond D."/>
            <person name="Price C."/>
            <person name="Rabbinowitsch E."/>
            <person name="Rutter S."/>
            <person name="Sanders M."/>
            <person name="Saunders D."/>
            <person name="Seeger K."/>
            <person name="Sharp S."/>
            <person name="Simmonds M."/>
            <person name="Skelton J."/>
            <person name="Squares R."/>
            <person name="Squares S."/>
            <person name="Stevens K."/>
            <person name="Unwin L."/>
            <person name="Whitehead S."/>
            <person name="Barrell B.G."/>
            <person name="Maskell D.J."/>
        </authorList>
    </citation>
    <scope>NUCLEOTIDE SEQUENCE [LARGE SCALE GENOMIC DNA]</scope>
    <source>
        <strain>Tohama I / ATCC BAA-589 / NCTC 13251</strain>
    </source>
</reference>
<organism>
    <name type="scientific">Bordetella pertussis (strain Tohama I / ATCC BAA-589 / NCTC 13251)</name>
    <dbReference type="NCBI Taxonomy" id="257313"/>
    <lineage>
        <taxon>Bacteria</taxon>
        <taxon>Pseudomonadati</taxon>
        <taxon>Pseudomonadota</taxon>
        <taxon>Betaproteobacteria</taxon>
        <taxon>Burkholderiales</taxon>
        <taxon>Alcaligenaceae</taxon>
        <taxon>Bordetella</taxon>
    </lineage>
</organism>
<accession>Q7VXE1</accession>
<comment type="function">
    <text evidence="1">Catalyzes the attachment of alanine to tRNA(Ala) in a two-step reaction: alanine is first activated by ATP to form Ala-AMP and then transferred to the acceptor end of tRNA(Ala). Also edits incorrectly charged Ser-tRNA(Ala) and Gly-tRNA(Ala) via its editing domain.</text>
</comment>
<comment type="catalytic activity">
    <reaction evidence="1">
        <text>tRNA(Ala) + L-alanine + ATP = L-alanyl-tRNA(Ala) + AMP + diphosphate</text>
        <dbReference type="Rhea" id="RHEA:12540"/>
        <dbReference type="Rhea" id="RHEA-COMP:9657"/>
        <dbReference type="Rhea" id="RHEA-COMP:9923"/>
        <dbReference type="ChEBI" id="CHEBI:30616"/>
        <dbReference type="ChEBI" id="CHEBI:33019"/>
        <dbReference type="ChEBI" id="CHEBI:57972"/>
        <dbReference type="ChEBI" id="CHEBI:78442"/>
        <dbReference type="ChEBI" id="CHEBI:78497"/>
        <dbReference type="ChEBI" id="CHEBI:456215"/>
        <dbReference type="EC" id="6.1.1.7"/>
    </reaction>
</comment>
<comment type="cofactor">
    <cofactor evidence="1">
        <name>Zn(2+)</name>
        <dbReference type="ChEBI" id="CHEBI:29105"/>
    </cofactor>
    <text evidence="1">Binds 1 zinc ion per subunit.</text>
</comment>
<comment type="subcellular location">
    <subcellularLocation>
        <location evidence="1">Cytoplasm</location>
    </subcellularLocation>
</comment>
<comment type="domain">
    <text evidence="1">Consists of three domains; the N-terminal catalytic domain, the editing domain and the C-terminal C-Ala domain. The editing domain removes incorrectly charged amino acids, while the C-Ala domain, along with tRNA(Ala), serves as a bridge to cooperatively bring together the editing and aminoacylation centers thus stimulating deacylation of misacylated tRNAs.</text>
</comment>
<comment type="similarity">
    <text evidence="1">Belongs to the class-II aminoacyl-tRNA synthetase family.</text>
</comment>
<name>SYA_BORPE</name>